<comment type="function">
    <text evidence="4">Mediates visceral muscle contractile activity (myotropic activity).</text>
</comment>
<comment type="subcellular location">
    <subcellularLocation>
        <location evidence="4">Secreted</location>
    </subcellularLocation>
</comment>
<comment type="similarity">
    <text evidence="1">Belongs to the periviscerokinin family.</text>
</comment>
<protein>
    <recommendedName>
        <fullName evidence="3">Periviscerokinin-3</fullName>
        <shortName evidence="3">DipPu-PVK-3</shortName>
    </recommendedName>
</protein>
<keyword id="KW-0027">Amidation</keyword>
<keyword id="KW-0903">Direct protein sequencing</keyword>
<keyword id="KW-0527">Neuropeptide</keyword>
<keyword id="KW-0964">Secreted</keyword>
<sequence>GSSGMIPFPRV</sequence>
<dbReference type="GO" id="GO:0005576">
    <property type="term" value="C:extracellular region"/>
    <property type="evidence" value="ECO:0007669"/>
    <property type="project" value="UniProtKB-SubCell"/>
</dbReference>
<dbReference type="GO" id="GO:0007218">
    <property type="term" value="P:neuropeptide signaling pathway"/>
    <property type="evidence" value="ECO:0007669"/>
    <property type="project" value="UniProtKB-KW"/>
</dbReference>
<dbReference type="InterPro" id="IPR013231">
    <property type="entry name" value="Periviscerokinin"/>
</dbReference>
<dbReference type="Pfam" id="PF08259">
    <property type="entry name" value="Periviscerokin"/>
    <property type="match status" value="1"/>
</dbReference>
<proteinExistence type="evidence at protein level"/>
<name>PVK3_DIPPU</name>
<evidence type="ECO:0000255" key="1"/>
<evidence type="ECO:0000269" key="2">
    <source>
    </source>
</evidence>
<evidence type="ECO:0000303" key="3">
    <source>
    </source>
</evidence>
<evidence type="ECO:0000305" key="4"/>
<feature type="peptide" id="PRO_0000378827" description="Periviscerokinin-3" evidence="2">
    <location>
        <begin position="1"/>
        <end position="11"/>
    </location>
</feature>
<feature type="modified residue" description="Valine amide" evidence="2">
    <location>
        <position position="11"/>
    </location>
</feature>
<accession>P85601</accession>
<organism>
    <name type="scientific">Diploptera punctata</name>
    <name type="common">Pacific beetle cockroach</name>
    <dbReference type="NCBI Taxonomy" id="6984"/>
    <lineage>
        <taxon>Eukaryota</taxon>
        <taxon>Metazoa</taxon>
        <taxon>Ecdysozoa</taxon>
        <taxon>Arthropoda</taxon>
        <taxon>Hexapoda</taxon>
        <taxon>Insecta</taxon>
        <taxon>Pterygota</taxon>
        <taxon>Neoptera</taxon>
        <taxon>Polyneoptera</taxon>
        <taxon>Dictyoptera</taxon>
        <taxon>Blattodea</taxon>
        <taxon>Blaberoidea</taxon>
        <taxon>Blaberidae</taxon>
        <taxon>Diplopterinae</taxon>
        <taxon>Diploptera</taxon>
    </lineage>
</organism>
<reference evidence="4" key="1">
    <citation type="journal article" date="2009" name="BMC Evol. Biol.">
        <title>A proteomic approach for studying insect phylogeny: CAPA peptides of ancient insect taxa (Dictyoptera, Blattoptera) as a test case.</title>
        <authorList>
            <person name="Roth S."/>
            <person name="Fromm B."/>
            <person name="Gaede G."/>
            <person name="Predel R."/>
        </authorList>
    </citation>
    <scope>PROTEIN SEQUENCE</scope>
    <scope>AMIDATION AT VAL-11</scope>
    <source>
        <tissue evidence="2">Abdominal perisympathetic organs</tissue>
    </source>
</reference>